<accession>B2SZV7</accession>
<evidence type="ECO:0000255" key="1">
    <source>
        <dbReference type="HAMAP-Rule" id="MF_00071"/>
    </source>
</evidence>
<name>LEPA_PARPJ</name>
<gene>
    <name evidence="1" type="primary">lepA</name>
    <name type="ordered locus">Bphyt_2901</name>
</gene>
<feature type="chain" id="PRO_1000092380" description="Elongation factor 4">
    <location>
        <begin position="1"/>
        <end position="597"/>
    </location>
</feature>
<feature type="domain" description="tr-type G">
    <location>
        <begin position="2"/>
        <end position="184"/>
    </location>
</feature>
<feature type="binding site" evidence="1">
    <location>
        <begin position="14"/>
        <end position="19"/>
    </location>
    <ligand>
        <name>GTP</name>
        <dbReference type="ChEBI" id="CHEBI:37565"/>
    </ligand>
</feature>
<feature type="binding site" evidence="1">
    <location>
        <begin position="131"/>
        <end position="134"/>
    </location>
    <ligand>
        <name>GTP</name>
        <dbReference type="ChEBI" id="CHEBI:37565"/>
    </ligand>
</feature>
<reference key="1">
    <citation type="journal article" date="2011" name="J. Bacteriol.">
        <title>Complete genome sequence of the plant growth-promoting endophyte Burkholderia phytofirmans strain PsJN.</title>
        <authorList>
            <person name="Weilharter A."/>
            <person name="Mitter B."/>
            <person name="Shin M.V."/>
            <person name="Chain P.S."/>
            <person name="Nowak J."/>
            <person name="Sessitsch A."/>
        </authorList>
    </citation>
    <scope>NUCLEOTIDE SEQUENCE [LARGE SCALE GENOMIC DNA]</scope>
    <source>
        <strain>DSM 17436 / LMG 22146 / PsJN</strain>
    </source>
</reference>
<protein>
    <recommendedName>
        <fullName evidence="1">Elongation factor 4</fullName>
        <shortName evidence="1">EF-4</shortName>
        <ecNumber evidence="1">3.6.5.n1</ecNumber>
    </recommendedName>
    <alternativeName>
        <fullName evidence="1">Ribosomal back-translocase LepA</fullName>
    </alternativeName>
</protein>
<sequence length="597" mass="66028">MDHIRNFSIIAHIDHGKSTLADRIIQICGGLSDREMESQVLDSMDLERERGITIKAQTAALTYKARNGEVYNLNMIDTPGHVDFSYEVSRSLSACEGALLVVDASQGVEAQTVANCYTAIELGVDVIPVLNKIDLPAANPENAIAEIEDVIGIDATDATHCSAKTGLGVEDVLEALVAKVPPPKGDPEAPLQALIIDSWFDNYVGVVMLVRIVNGTLRPKDKIRMMATGAQYPVEHVGVFTPKSKNLESLSAGQVGFIIAGIKELAAAKVGDTVTLVNRPAPEPLPGFKEVKPQVFAGLYPVEANQYDALRDSLEKLKLNDASLMYEPEVSQALGFGFRCGFLGLLHMEIVQERLEREFDMDLITTAPTVVYEVLQRDGTTIMVENPAKMPEPSKIEEVREPIVTVNLYMPQDYVGSVITLCTQKRGTQINMQYHGRQVQLTYEIPMGEVVLDFFDRLKSISRGYASMDYEFKEYRAADVVKVDMLINGDKVDALSVIVHRSQSQYRGREVAAKMRELIPRQMYDVAIQATIGANIIARENIKALRKNVLAKCYGGDISRKKKLLEKQKAGKKRMKQVGSVEIPQEAFLAILRVEDK</sequence>
<dbReference type="EC" id="3.6.5.n1" evidence="1"/>
<dbReference type="EMBL" id="CP001052">
    <property type="protein sequence ID" value="ACD17295.1"/>
    <property type="molecule type" value="Genomic_DNA"/>
</dbReference>
<dbReference type="RefSeq" id="WP_012433880.1">
    <property type="nucleotide sequence ID" value="NC_010681.1"/>
</dbReference>
<dbReference type="SMR" id="B2SZV7"/>
<dbReference type="STRING" id="398527.Bphyt_2901"/>
<dbReference type="KEGG" id="bpy:Bphyt_2901"/>
<dbReference type="eggNOG" id="COG0481">
    <property type="taxonomic scope" value="Bacteria"/>
</dbReference>
<dbReference type="HOGENOM" id="CLU_009995_3_3_4"/>
<dbReference type="OrthoDB" id="9801472at2"/>
<dbReference type="Proteomes" id="UP000001739">
    <property type="component" value="Chromosome 1"/>
</dbReference>
<dbReference type="GO" id="GO:0005886">
    <property type="term" value="C:plasma membrane"/>
    <property type="evidence" value="ECO:0007669"/>
    <property type="project" value="UniProtKB-SubCell"/>
</dbReference>
<dbReference type="GO" id="GO:0005525">
    <property type="term" value="F:GTP binding"/>
    <property type="evidence" value="ECO:0007669"/>
    <property type="project" value="UniProtKB-UniRule"/>
</dbReference>
<dbReference type="GO" id="GO:0003924">
    <property type="term" value="F:GTPase activity"/>
    <property type="evidence" value="ECO:0007669"/>
    <property type="project" value="UniProtKB-UniRule"/>
</dbReference>
<dbReference type="GO" id="GO:0097216">
    <property type="term" value="F:guanosine tetraphosphate binding"/>
    <property type="evidence" value="ECO:0007669"/>
    <property type="project" value="UniProtKB-ARBA"/>
</dbReference>
<dbReference type="GO" id="GO:0043022">
    <property type="term" value="F:ribosome binding"/>
    <property type="evidence" value="ECO:0007669"/>
    <property type="project" value="UniProtKB-UniRule"/>
</dbReference>
<dbReference type="GO" id="GO:0003746">
    <property type="term" value="F:translation elongation factor activity"/>
    <property type="evidence" value="ECO:0007669"/>
    <property type="project" value="UniProtKB-UniRule"/>
</dbReference>
<dbReference type="GO" id="GO:0045727">
    <property type="term" value="P:positive regulation of translation"/>
    <property type="evidence" value="ECO:0007669"/>
    <property type="project" value="UniProtKB-UniRule"/>
</dbReference>
<dbReference type="CDD" id="cd03699">
    <property type="entry name" value="EF4_II"/>
    <property type="match status" value="1"/>
</dbReference>
<dbReference type="CDD" id="cd16260">
    <property type="entry name" value="EF4_III"/>
    <property type="match status" value="1"/>
</dbReference>
<dbReference type="CDD" id="cd01890">
    <property type="entry name" value="LepA"/>
    <property type="match status" value="1"/>
</dbReference>
<dbReference type="CDD" id="cd03709">
    <property type="entry name" value="lepA_C"/>
    <property type="match status" value="1"/>
</dbReference>
<dbReference type="FunFam" id="3.40.50.300:FF:000078">
    <property type="entry name" value="Elongation factor 4"/>
    <property type="match status" value="1"/>
</dbReference>
<dbReference type="FunFam" id="2.40.30.10:FF:000015">
    <property type="entry name" value="Translation factor GUF1, mitochondrial"/>
    <property type="match status" value="1"/>
</dbReference>
<dbReference type="FunFam" id="3.30.70.240:FF:000007">
    <property type="entry name" value="Translation factor GUF1, mitochondrial"/>
    <property type="match status" value="1"/>
</dbReference>
<dbReference type="FunFam" id="3.30.70.2570:FF:000001">
    <property type="entry name" value="Translation factor GUF1, mitochondrial"/>
    <property type="match status" value="1"/>
</dbReference>
<dbReference type="FunFam" id="3.30.70.870:FF:000004">
    <property type="entry name" value="Translation factor GUF1, mitochondrial"/>
    <property type="match status" value="1"/>
</dbReference>
<dbReference type="Gene3D" id="3.30.70.240">
    <property type="match status" value="1"/>
</dbReference>
<dbReference type="Gene3D" id="3.30.70.2570">
    <property type="entry name" value="Elongation factor 4, C-terminal domain"/>
    <property type="match status" value="1"/>
</dbReference>
<dbReference type="Gene3D" id="3.30.70.870">
    <property type="entry name" value="Elongation Factor G (Translational Gtpase), domain 3"/>
    <property type="match status" value="1"/>
</dbReference>
<dbReference type="Gene3D" id="3.40.50.300">
    <property type="entry name" value="P-loop containing nucleotide triphosphate hydrolases"/>
    <property type="match status" value="1"/>
</dbReference>
<dbReference type="Gene3D" id="2.40.30.10">
    <property type="entry name" value="Translation factors"/>
    <property type="match status" value="1"/>
</dbReference>
<dbReference type="HAMAP" id="MF_00071">
    <property type="entry name" value="LepA"/>
    <property type="match status" value="1"/>
</dbReference>
<dbReference type="InterPro" id="IPR006297">
    <property type="entry name" value="EF-4"/>
</dbReference>
<dbReference type="InterPro" id="IPR035647">
    <property type="entry name" value="EFG_III/V"/>
</dbReference>
<dbReference type="InterPro" id="IPR000640">
    <property type="entry name" value="EFG_V-like"/>
</dbReference>
<dbReference type="InterPro" id="IPR004161">
    <property type="entry name" value="EFTu-like_2"/>
</dbReference>
<dbReference type="InterPro" id="IPR031157">
    <property type="entry name" value="G_TR_CS"/>
</dbReference>
<dbReference type="InterPro" id="IPR038363">
    <property type="entry name" value="LepA_C_sf"/>
</dbReference>
<dbReference type="InterPro" id="IPR013842">
    <property type="entry name" value="LepA_CTD"/>
</dbReference>
<dbReference type="InterPro" id="IPR035654">
    <property type="entry name" value="LepA_IV"/>
</dbReference>
<dbReference type="InterPro" id="IPR027417">
    <property type="entry name" value="P-loop_NTPase"/>
</dbReference>
<dbReference type="InterPro" id="IPR005225">
    <property type="entry name" value="Small_GTP-bd"/>
</dbReference>
<dbReference type="InterPro" id="IPR000795">
    <property type="entry name" value="T_Tr_GTP-bd_dom"/>
</dbReference>
<dbReference type="InterPro" id="IPR009000">
    <property type="entry name" value="Transl_B-barrel_sf"/>
</dbReference>
<dbReference type="NCBIfam" id="TIGR01393">
    <property type="entry name" value="lepA"/>
    <property type="match status" value="1"/>
</dbReference>
<dbReference type="NCBIfam" id="TIGR00231">
    <property type="entry name" value="small_GTP"/>
    <property type="match status" value="1"/>
</dbReference>
<dbReference type="PANTHER" id="PTHR43512:SF4">
    <property type="entry name" value="TRANSLATION FACTOR GUF1 HOMOLOG, CHLOROPLASTIC"/>
    <property type="match status" value="1"/>
</dbReference>
<dbReference type="PANTHER" id="PTHR43512">
    <property type="entry name" value="TRANSLATION FACTOR GUF1-RELATED"/>
    <property type="match status" value="1"/>
</dbReference>
<dbReference type="Pfam" id="PF00679">
    <property type="entry name" value="EFG_C"/>
    <property type="match status" value="1"/>
</dbReference>
<dbReference type="Pfam" id="PF00009">
    <property type="entry name" value="GTP_EFTU"/>
    <property type="match status" value="1"/>
</dbReference>
<dbReference type="Pfam" id="PF03144">
    <property type="entry name" value="GTP_EFTU_D2"/>
    <property type="match status" value="1"/>
</dbReference>
<dbReference type="Pfam" id="PF06421">
    <property type="entry name" value="LepA_C"/>
    <property type="match status" value="1"/>
</dbReference>
<dbReference type="PRINTS" id="PR00315">
    <property type="entry name" value="ELONGATNFCT"/>
</dbReference>
<dbReference type="SMART" id="SM00838">
    <property type="entry name" value="EFG_C"/>
    <property type="match status" value="1"/>
</dbReference>
<dbReference type="SUPFAM" id="SSF54980">
    <property type="entry name" value="EF-G C-terminal domain-like"/>
    <property type="match status" value="2"/>
</dbReference>
<dbReference type="SUPFAM" id="SSF52540">
    <property type="entry name" value="P-loop containing nucleoside triphosphate hydrolases"/>
    <property type="match status" value="1"/>
</dbReference>
<dbReference type="SUPFAM" id="SSF50447">
    <property type="entry name" value="Translation proteins"/>
    <property type="match status" value="1"/>
</dbReference>
<dbReference type="PROSITE" id="PS00301">
    <property type="entry name" value="G_TR_1"/>
    <property type="match status" value="1"/>
</dbReference>
<dbReference type="PROSITE" id="PS51722">
    <property type="entry name" value="G_TR_2"/>
    <property type="match status" value="1"/>
</dbReference>
<comment type="function">
    <text evidence="1">Required for accurate and efficient protein synthesis under certain stress conditions. May act as a fidelity factor of the translation reaction, by catalyzing a one-codon backward translocation of tRNAs on improperly translocated ribosomes. Back-translocation proceeds from a post-translocation (POST) complex to a pre-translocation (PRE) complex, thus giving elongation factor G a second chance to translocate the tRNAs correctly. Binds to ribosomes in a GTP-dependent manner.</text>
</comment>
<comment type="catalytic activity">
    <reaction evidence="1">
        <text>GTP + H2O = GDP + phosphate + H(+)</text>
        <dbReference type="Rhea" id="RHEA:19669"/>
        <dbReference type="ChEBI" id="CHEBI:15377"/>
        <dbReference type="ChEBI" id="CHEBI:15378"/>
        <dbReference type="ChEBI" id="CHEBI:37565"/>
        <dbReference type="ChEBI" id="CHEBI:43474"/>
        <dbReference type="ChEBI" id="CHEBI:58189"/>
        <dbReference type="EC" id="3.6.5.n1"/>
    </reaction>
</comment>
<comment type="subcellular location">
    <subcellularLocation>
        <location evidence="1">Cell inner membrane</location>
        <topology evidence="1">Peripheral membrane protein</topology>
        <orientation evidence="1">Cytoplasmic side</orientation>
    </subcellularLocation>
</comment>
<comment type="similarity">
    <text evidence="1">Belongs to the TRAFAC class translation factor GTPase superfamily. Classic translation factor GTPase family. LepA subfamily.</text>
</comment>
<proteinExistence type="inferred from homology"/>
<keyword id="KW-0997">Cell inner membrane</keyword>
<keyword id="KW-1003">Cell membrane</keyword>
<keyword id="KW-0342">GTP-binding</keyword>
<keyword id="KW-0378">Hydrolase</keyword>
<keyword id="KW-0472">Membrane</keyword>
<keyword id="KW-0547">Nucleotide-binding</keyword>
<keyword id="KW-0648">Protein biosynthesis</keyword>
<organism>
    <name type="scientific">Paraburkholderia phytofirmans (strain DSM 17436 / LMG 22146 / PsJN)</name>
    <name type="common">Burkholderia phytofirmans</name>
    <dbReference type="NCBI Taxonomy" id="398527"/>
    <lineage>
        <taxon>Bacteria</taxon>
        <taxon>Pseudomonadati</taxon>
        <taxon>Pseudomonadota</taxon>
        <taxon>Betaproteobacteria</taxon>
        <taxon>Burkholderiales</taxon>
        <taxon>Burkholderiaceae</taxon>
        <taxon>Paraburkholderia</taxon>
    </lineage>
</organism>